<keyword id="KW-0002">3D-structure</keyword>
<keyword id="KW-0158">Chromosome</keyword>
<keyword id="KW-0903">Direct protein sequencing</keyword>
<keyword id="KW-0238">DNA-binding</keyword>
<keyword id="KW-0325">Glycoprotein</keyword>
<keyword id="KW-1017">Isopeptide bond</keyword>
<keyword id="KW-0488">Methylation</keyword>
<keyword id="KW-0544">Nucleosome core</keyword>
<keyword id="KW-0539">Nucleus</keyword>
<keyword id="KW-1185">Reference proteome</keyword>
<keyword id="KW-0832">Ubl conjugation</keyword>
<accession>P02283</accession>
<accession>Q4ABE1</accession>
<accession>Q9W5U7</accession>
<feature type="initiator methionine" description="Removed">
    <location>
        <position position="1"/>
    </location>
</feature>
<feature type="chain" id="PRO_0000071861" description="Histone H2B">
    <location>
        <begin position="2"/>
        <end position="123"/>
    </location>
</feature>
<feature type="region of interest" description="Disordered" evidence="2">
    <location>
        <begin position="1"/>
        <end position="30"/>
    </location>
</feature>
<feature type="modified residue" description="N-methylproline; partial" evidence="7">
    <location>
        <position position="2"/>
    </location>
</feature>
<feature type="modified residue" description="N6-succinyllysine" evidence="5">
    <location>
        <position position="44"/>
    </location>
</feature>
<feature type="modified residue" description="N6-succinyllysine" evidence="5">
    <location>
        <position position="114"/>
    </location>
</feature>
<feature type="modified residue" description="N6-succinyllysine" evidence="5">
    <location>
        <position position="118"/>
    </location>
</feature>
<feature type="glycosylation site" description="O-linked (GlcNAc) serine" evidence="1">
    <location>
        <position position="110"/>
    </location>
</feature>
<feature type="cross-link" description="Glycyl lysine isopeptide (Lys-Gly) (interchain with G-Cter in ubiquitin)" evidence="4 10">
    <location>
        <position position="118"/>
    </location>
</feature>
<feature type="sequence conflict" description="In Ref. 1; AA sequence." evidence="8" ref="1">
    <original>R</original>
    <variation>C</variation>
    <location>
        <position position="77"/>
    </location>
</feature>
<feature type="helix" evidence="14">
    <location>
        <begin position="17"/>
        <end position="19"/>
    </location>
</feature>
<feature type="strand" evidence="14">
    <location>
        <begin position="22"/>
        <end position="24"/>
    </location>
</feature>
<feature type="helix" evidence="13">
    <location>
        <begin position="36"/>
        <end position="46"/>
    </location>
</feature>
<feature type="helix" evidence="13">
    <location>
        <begin position="54"/>
        <end position="81"/>
    </location>
</feature>
<feature type="strand" evidence="15">
    <location>
        <begin position="85"/>
        <end position="87"/>
    </location>
</feature>
<feature type="helix" evidence="13">
    <location>
        <begin position="89"/>
        <end position="99"/>
    </location>
</feature>
<feature type="helix" evidence="13">
    <location>
        <begin position="102"/>
        <end position="121"/>
    </location>
</feature>
<comment type="function">
    <text>Core component of nucleosome. Nucleosomes wrap and compact DNA into chromatin, limiting DNA accessibility to the cellular machineries which require DNA as a template. Histones thereby play a central role in transcription regulation, DNA repair, DNA replication and chromosomal stability. DNA accessibility is regulated via a complex set of post-translational modifications of histones, also called histone code, and nucleosome remodeling.</text>
</comment>
<comment type="subunit">
    <text>The nucleosome is a histone octamer containing two molecules each of H2A, H2B, H3 and H4 assembled in one H3-H4 heterotetramer and two H2A-H2B heterodimers. The octamer wraps approximately 147 bp of DNA.</text>
</comment>
<comment type="interaction">
    <interactant intactId="EBI-188137">
        <id>P02283</id>
    </interactant>
    <interactant intactId="EBI-708350">
        <id>O15265</id>
        <label>ATXN7</label>
    </interactant>
    <organismsDiffer>true</organismsDiffer>
    <experiments>2</experiments>
</comment>
<comment type="subcellular location">
    <subcellularLocation>
        <location>Nucleus</location>
    </subcellularLocation>
    <subcellularLocation>
        <location>Chromosome</location>
    </subcellularLocation>
</comment>
<comment type="PTM">
    <text evidence="6">Phosphorylated by the catalytic component of the Dbf4-dependent kinase (DDK) complex Cdc7.</text>
</comment>
<comment type="PTM">
    <text evidence="3 4 12">Monoubiquitination of Lys-118 by Bre1 gives a specific tag for epigenetic transcriptional activation and is also prerequisite for histone H3 'Lys-4' and 'Lys-79' methylation (Probable). Deubiquitination of Lys-118 by the SAGA complex is involved in activating transcription of a large subset of genes (PubMed:18188155, PubMed:21764853).</text>
</comment>
<comment type="PTM">
    <text evidence="7">Methylation at Pro-2 increases upon heat shock.</text>
</comment>
<comment type="PTM">
    <text evidence="8">GlcNAcylation at Ser-110 promotes monoubiquitination of Lys-118. It fluctuates in response to extracellular glucose, and associates with transcribed genes (Probable).</text>
</comment>
<comment type="similarity">
    <text evidence="8">Belongs to the histone H2B family.</text>
</comment>
<comment type="caution">
    <text evidence="9 11">Was reported to be phosphorylated at Ser-34. However, the paper was retracted because some data, results and conclusions in the paper are not reliable.</text>
</comment>
<protein>
    <recommendedName>
        <fullName>Histone H2B</fullName>
    </recommendedName>
</protein>
<reference key="1">
    <citation type="journal article" date="1979" name="Biochemistry">
        <title>Sequence of histone 2B of Drosophila melanogaster.</title>
        <authorList>
            <person name="Elgin S.C.R."/>
            <person name="Schilling J."/>
            <person name="Hood L.E."/>
        </authorList>
    </citation>
    <scope>PROTEIN SEQUENCE (HIS2B)</scope>
</reference>
<reference key="2">
    <citation type="journal article" date="1989" name="Nucleic Acids Res.">
        <title>tRNA derived insertion element in histone gene repeating unit of Drosophila melanogaster.</title>
        <authorList>
            <person name="Matsuo Y."/>
            <person name="Yamazaki T."/>
        </authorList>
    </citation>
    <scope>NUCLEOTIDE SEQUENCE [GENOMIC DNA] (HIS2B)</scope>
    <source>
        <strain>AK-194</strain>
    </source>
</reference>
<reference key="3">
    <citation type="journal article" date="2000" name="Science">
        <title>The genome sequence of Drosophila melanogaster.</title>
        <authorList>
            <person name="Adams M.D."/>
            <person name="Celniker S.E."/>
            <person name="Holt R.A."/>
            <person name="Evans C.A."/>
            <person name="Gocayne J.D."/>
            <person name="Amanatides P.G."/>
            <person name="Scherer S.E."/>
            <person name="Li P.W."/>
            <person name="Hoskins R.A."/>
            <person name="Galle R.F."/>
            <person name="George R.A."/>
            <person name="Lewis S.E."/>
            <person name="Richards S."/>
            <person name="Ashburner M."/>
            <person name="Henderson S.N."/>
            <person name="Sutton G.G."/>
            <person name="Wortman J.R."/>
            <person name="Yandell M.D."/>
            <person name="Zhang Q."/>
            <person name="Chen L.X."/>
            <person name="Brandon R.C."/>
            <person name="Rogers Y.-H.C."/>
            <person name="Blazej R.G."/>
            <person name="Champe M."/>
            <person name="Pfeiffer B.D."/>
            <person name="Wan K.H."/>
            <person name="Doyle C."/>
            <person name="Baxter E.G."/>
            <person name="Helt G."/>
            <person name="Nelson C.R."/>
            <person name="Miklos G.L.G."/>
            <person name="Abril J.F."/>
            <person name="Agbayani A."/>
            <person name="An H.-J."/>
            <person name="Andrews-Pfannkoch C."/>
            <person name="Baldwin D."/>
            <person name="Ballew R.M."/>
            <person name="Basu A."/>
            <person name="Baxendale J."/>
            <person name="Bayraktaroglu L."/>
            <person name="Beasley E.M."/>
            <person name="Beeson K.Y."/>
            <person name="Benos P.V."/>
            <person name="Berman B.P."/>
            <person name="Bhandari D."/>
            <person name="Bolshakov S."/>
            <person name="Borkova D."/>
            <person name="Botchan M.R."/>
            <person name="Bouck J."/>
            <person name="Brokstein P."/>
            <person name="Brottier P."/>
            <person name="Burtis K.C."/>
            <person name="Busam D.A."/>
            <person name="Butler H."/>
            <person name="Cadieu E."/>
            <person name="Center A."/>
            <person name="Chandra I."/>
            <person name="Cherry J.M."/>
            <person name="Cawley S."/>
            <person name="Dahlke C."/>
            <person name="Davenport L.B."/>
            <person name="Davies P."/>
            <person name="de Pablos B."/>
            <person name="Delcher A."/>
            <person name="Deng Z."/>
            <person name="Mays A.D."/>
            <person name="Dew I."/>
            <person name="Dietz S.M."/>
            <person name="Dodson K."/>
            <person name="Doup L.E."/>
            <person name="Downes M."/>
            <person name="Dugan-Rocha S."/>
            <person name="Dunkov B.C."/>
            <person name="Dunn P."/>
            <person name="Durbin K.J."/>
            <person name="Evangelista C.C."/>
            <person name="Ferraz C."/>
            <person name="Ferriera S."/>
            <person name="Fleischmann W."/>
            <person name="Fosler C."/>
            <person name="Gabrielian A.E."/>
            <person name="Garg N.S."/>
            <person name="Gelbart W.M."/>
            <person name="Glasser K."/>
            <person name="Glodek A."/>
            <person name="Gong F."/>
            <person name="Gorrell J.H."/>
            <person name="Gu Z."/>
            <person name="Guan P."/>
            <person name="Harris M."/>
            <person name="Harris N.L."/>
            <person name="Harvey D.A."/>
            <person name="Heiman T.J."/>
            <person name="Hernandez J.R."/>
            <person name="Houck J."/>
            <person name="Hostin D."/>
            <person name="Houston K.A."/>
            <person name="Howland T.J."/>
            <person name="Wei M.-H."/>
            <person name="Ibegwam C."/>
            <person name="Jalali M."/>
            <person name="Kalush F."/>
            <person name="Karpen G.H."/>
            <person name="Ke Z."/>
            <person name="Kennison J.A."/>
            <person name="Ketchum K.A."/>
            <person name="Kimmel B.E."/>
            <person name="Kodira C.D."/>
            <person name="Kraft C.L."/>
            <person name="Kravitz S."/>
            <person name="Kulp D."/>
            <person name="Lai Z."/>
            <person name="Lasko P."/>
            <person name="Lei Y."/>
            <person name="Levitsky A.A."/>
            <person name="Li J.H."/>
            <person name="Li Z."/>
            <person name="Liang Y."/>
            <person name="Lin X."/>
            <person name="Liu X."/>
            <person name="Mattei B."/>
            <person name="McIntosh T.C."/>
            <person name="McLeod M.P."/>
            <person name="McPherson D."/>
            <person name="Merkulov G."/>
            <person name="Milshina N.V."/>
            <person name="Mobarry C."/>
            <person name="Morris J."/>
            <person name="Moshrefi A."/>
            <person name="Mount S.M."/>
            <person name="Moy M."/>
            <person name="Murphy B."/>
            <person name="Murphy L."/>
            <person name="Muzny D.M."/>
            <person name="Nelson D.L."/>
            <person name="Nelson D.R."/>
            <person name="Nelson K.A."/>
            <person name="Nixon K."/>
            <person name="Nusskern D.R."/>
            <person name="Pacleb J.M."/>
            <person name="Palazzolo M."/>
            <person name="Pittman G.S."/>
            <person name="Pan S."/>
            <person name="Pollard J."/>
            <person name="Puri V."/>
            <person name="Reese M.G."/>
            <person name="Reinert K."/>
            <person name="Remington K."/>
            <person name="Saunders R.D.C."/>
            <person name="Scheeler F."/>
            <person name="Shen H."/>
            <person name="Shue B.C."/>
            <person name="Siden-Kiamos I."/>
            <person name="Simpson M."/>
            <person name="Skupski M.P."/>
            <person name="Smith T.J."/>
            <person name="Spier E."/>
            <person name="Spradling A.C."/>
            <person name="Stapleton M."/>
            <person name="Strong R."/>
            <person name="Sun E."/>
            <person name="Svirskas R."/>
            <person name="Tector C."/>
            <person name="Turner R."/>
            <person name="Venter E."/>
            <person name="Wang A.H."/>
            <person name="Wang X."/>
            <person name="Wang Z.-Y."/>
            <person name="Wassarman D.A."/>
            <person name="Weinstock G.M."/>
            <person name="Weissenbach J."/>
            <person name="Williams S.M."/>
            <person name="Woodage T."/>
            <person name="Worley K.C."/>
            <person name="Wu D."/>
            <person name="Yang S."/>
            <person name="Yao Q.A."/>
            <person name="Ye J."/>
            <person name="Yeh R.-F."/>
            <person name="Zaveri J.S."/>
            <person name="Zhan M."/>
            <person name="Zhang G."/>
            <person name="Zhao Q."/>
            <person name="Zheng L."/>
            <person name="Zheng X.H."/>
            <person name="Zhong F.N."/>
            <person name="Zhong W."/>
            <person name="Zhou X."/>
            <person name="Zhu S.C."/>
            <person name="Zhu X."/>
            <person name="Smith H.O."/>
            <person name="Gibbs R.A."/>
            <person name="Myers E.W."/>
            <person name="Rubin G.M."/>
            <person name="Venter J.C."/>
        </authorList>
    </citation>
    <scope>NUCLEOTIDE SEQUENCE [LARGE SCALE GENOMIC DNA] (HIS2B:CG17949)</scope>
    <source>
        <strain>Berkeley</strain>
    </source>
</reference>
<reference key="4">
    <citation type="journal article" date="2002" name="Genome Biol.">
        <title>Annotation of the Drosophila melanogaster euchromatic genome: a systematic review.</title>
        <authorList>
            <person name="Misra S."/>
            <person name="Crosby M.A."/>
            <person name="Mungall C.J."/>
            <person name="Matthews B.B."/>
            <person name="Campbell K.S."/>
            <person name="Hradecky P."/>
            <person name="Huang Y."/>
            <person name="Kaminker J.S."/>
            <person name="Millburn G.H."/>
            <person name="Prochnik S.E."/>
            <person name="Smith C.D."/>
            <person name="Tupy J.L."/>
            <person name="Whitfield E.J."/>
            <person name="Bayraktaroglu L."/>
            <person name="Berman B.P."/>
            <person name="Bettencourt B.R."/>
            <person name="Celniker S.E."/>
            <person name="de Grey A.D.N.J."/>
            <person name="Drysdale R.A."/>
            <person name="Harris N.L."/>
            <person name="Richter J."/>
            <person name="Russo S."/>
            <person name="Schroeder A.J."/>
            <person name="Shu S.Q."/>
            <person name="Stapleton M."/>
            <person name="Yamada C."/>
            <person name="Ashburner M."/>
            <person name="Gelbart W.M."/>
            <person name="Rubin G.M."/>
            <person name="Lewis S.E."/>
        </authorList>
    </citation>
    <scope>GENOME REANNOTATION</scope>
    <source>
        <strain>Berkeley</strain>
    </source>
</reference>
<reference key="5">
    <citation type="thesis" date="1979" institute="University of Stanford" country="United States">
        <authorList>
            <person name="Goldberg M.L."/>
        </authorList>
    </citation>
    <scope>NUCLEOTIDE SEQUENCE [GENOMIC DNA] OF 1-118 (HIS2B)</scope>
</reference>
<reference key="6">
    <citation type="journal article" date="1988" name="J. Biol. Chem.">
        <title>Methylation of Drosophila histones at proline, lysine, and arginine residues during heat shock.</title>
        <authorList>
            <person name="Desrosiers R."/>
            <person name="Tanguay R.M."/>
        </authorList>
    </citation>
    <scope>METHYLATION AT PRO-2</scope>
</reference>
<reference key="7">
    <citation type="journal article" date="2004" name="Science">
        <title>TAF1 activates transcription by phosphorylation of serine 33 in histone H2B.</title>
        <authorList>
            <person name="Maile T."/>
            <person name="Kwoczynski S."/>
            <person name="Katzenberger R.J."/>
            <person name="Wassarman D.A."/>
            <person name="Sauer F."/>
        </authorList>
    </citation>
    <scope>RETRACTED PAPER</scope>
</reference>
<reference key="8">
    <citation type="journal article" date="2014" name="Science">
        <authorList>
            <person name="McNutt M."/>
        </authorList>
    </citation>
    <scope>RETRACTION NOTICE OF PUBMED:15143281</scope>
</reference>
<reference key="9">
    <citation type="journal article" date="2005" name="Dev. Cell">
        <title>Bre1 is required for Notch signaling and histone modification.</title>
        <authorList>
            <person name="Bray S."/>
            <person name="Musisi H."/>
            <person name="Bienz M."/>
        </authorList>
    </citation>
    <scope>PROBABLE UBIQUITINATION</scope>
</reference>
<reference key="10">
    <citation type="journal article" date="2008" name="EMBO J.">
        <title>SAGA-mediated H2B deubiquitination controls the development of neuronal connectivity in the Drosophila visual system.</title>
        <authorList>
            <person name="Weake V.M."/>
            <person name="Lee K.K."/>
            <person name="Guelman S."/>
            <person name="Lin C.-H."/>
            <person name="Seidel C."/>
            <person name="Abmayr S.M."/>
            <person name="Workman J.L."/>
        </authorList>
    </citation>
    <scope>UBIQUITINATION</scope>
</reference>
<reference key="11">
    <citation type="journal article" date="2011" name="Genes Dev.">
        <title>Post-transcription initiation function of the ubiquitous SAGA complex in tissue-specific gene activation.</title>
        <authorList>
            <person name="Weake V.M."/>
            <person name="Dyer J.O."/>
            <person name="Seidel C."/>
            <person name="Box A."/>
            <person name="Swanson S.K."/>
            <person name="Peak A."/>
            <person name="Florens L."/>
            <person name="Washburn M.P."/>
            <person name="Abmayr S.M."/>
            <person name="Workman J.L."/>
        </authorList>
    </citation>
    <scope>UBIQUITINATION AT LYS-118</scope>
</reference>
<reference key="12">
    <citation type="journal article" date="2011" name="Nature">
        <title>GlcNAcylation of histone H2B facilitates its monoubiquitination.</title>
        <authorList>
            <person name="Fujiki R."/>
            <person name="Hashiba W."/>
            <person name="Sekine H."/>
            <person name="Yokoyama A."/>
            <person name="Chikanishi T."/>
            <person name="Ito S."/>
            <person name="Imai Y."/>
            <person name="Kim J."/>
            <person name="He H.H."/>
            <person name="Igarashi K."/>
            <person name="Kanno J."/>
            <person name="Ohtake F."/>
            <person name="Kitagawa H."/>
            <person name="Roeder R.G."/>
            <person name="Brown M."/>
            <person name="Kato S."/>
        </authorList>
    </citation>
    <scope>GLYCOSYLATION</scope>
</reference>
<reference key="13">
    <citation type="journal article" date="2012" name="Mol. Cell. Proteomics">
        <title>Lysine succinylation and lysine malonylation in histones.</title>
        <authorList>
            <person name="Xie Z."/>
            <person name="Dai J."/>
            <person name="Dai L."/>
            <person name="Tan M."/>
            <person name="Cheng Z."/>
            <person name="Wu Y."/>
            <person name="Boeke J.D."/>
            <person name="Zhao Y."/>
        </authorList>
    </citation>
    <scope>SUCCINYLATION AT LYS-44; LYS-114 AND LYS-118</scope>
</reference>
<reference key="14">
    <citation type="journal article" date="2015" name="J. Biol. Chem.">
        <title>Characterization of a Drosophila ortholog of the Cdc7 kinase: a role for Cdc7 in endoreplication independent of Chiffon.</title>
        <authorList>
            <person name="Stephenson R."/>
            <person name="Hosler M.R."/>
            <person name="Gavande N.S."/>
            <person name="Ghosh A.K."/>
            <person name="Weake V.M."/>
        </authorList>
    </citation>
    <scope>PHOSPHORYLATION</scope>
</reference>
<proteinExistence type="evidence at protein level"/>
<name>H2B_DROME</name>
<dbReference type="EMBL" id="X14215">
    <property type="protein sequence ID" value="CAA32432.1"/>
    <property type="molecule type" value="Genomic_DNA"/>
</dbReference>
<dbReference type="EMBL" id="AE014134">
    <property type="protein sequence ID" value="AAN11124.1"/>
    <property type="molecule type" value="Genomic_DNA"/>
</dbReference>
<dbReference type="EMBL" id="AE014134">
    <property type="protein sequence ID" value="AAZ66483.1"/>
    <property type="molecule type" value="Genomic_DNA"/>
</dbReference>
<dbReference type="EMBL" id="AE014134">
    <property type="protein sequence ID" value="AAZ66487.1"/>
    <property type="molecule type" value="Genomic_DNA"/>
</dbReference>
<dbReference type="EMBL" id="AE014134">
    <property type="protein sequence ID" value="AAZ66492.1"/>
    <property type="molecule type" value="Genomic_DNA"/>
</dbReference>
<dbReference type="EMBL" id="AE014134">
    <property type="protein sequence ID" value="AAZ66496.1"/>
    <property type="molecule type" value="Genomic_DNA"/>
</dbReference>
<dbReference type="EMBL" id="AE014134">
    <property type="protein sequence ID" value="AAZ66501.1"/>
    <property type="molecule type" value="Genomic_DNA"/>
</dbReference>
<dbReference type="EMBL" id="AE014134">
    <property type="protein sequence ID" value="AAZ66506.1"/>
    <property type="molecule type" value="Genomic_DNA"/>
</dbReference>
<dbReference type="EMBL" id="AE014134">
    <property type="protein sequence ID" value="AAZ66511.1"/>
    <property type="molecule type" value="Genomic_DNA"/>
</dbReference>
<dbReference type="EMBL" id="AE014134">
    <property type="protein sequence ID" value="AAZ66521.1"/>
    <property type="molecule type" value="Genomic_DNA"/>
</dbReference>
<dbReference type="EMBL" id="AE014134">
    <property type="protein sequence ID" value="AAZ66531.1"/>
    <property type="molecule type" value="Genomic_DNA"/>
</dbReference>
<dbReference type="EMBL" id="AE014134">
    <property type="protein sequence ID" value="AAZ66576.1"/>
    <property type="molecule type" value="Genomic_DNA"/>
</dbReference>
<dbReference type="EMBL" id="AE014134">
    <property type="protein sequence ID" value="AAZ66571.1"/>
    <property type="molecule type" value="Genomic_DNA"/>
</dbReference>
<dbReference type="EMBL" id="AE014134">
    <property type="protein sequence ID" value="AAZ66566.1"/>
    <property type="molecule type" value="Genomic_DNA"/>
</dbReference>
<dbReference type="EMBL" id="AE014134">
    <property type="protein sequence ID" value="AAZ66561.1"/>
    <property type="molecule type" value="Genomic_DNA"/>
</dbReference>
<dbReference type="EMBL" id="AE014134">
    <property type="protein sequence ID" value="AAZ66556.1"/>
    <property type="molecule type" value="Genomic_DNA"/>
</dbReference>
<dbReference type="EMBL" id="AE014134">
    <property type="protein sequence ID" value="AAZ66551.1"/>
    <property type="molecule type" value="Genomic_DNA"/>
</dbReference>
<dbReference type="EMBL" id="AE014134">
    <property type="protein sequence ID" value="AAZ66546.1"/>
    <property type="molecule type" value="Genomic_DNA"/>
</dbReference>
<dbReference type="EMBL" id="AE014134">
    <property type="protein sequence ID" value="AAZ66541.1"/>
    <property type="molecule type" value="Genomic_DNA"/>
</dbReference>
<dbReference type="EMBL" id="AE014134">
    <property type="protein sequence ID" value="AAZ66536.1"/>
    <property type="molecule type" value="Genomic_DNA"/>
</dbReference>
<dbReference type="EMBL" id="AE014134">
    <property type="protein sequence ID" value="AAZ66479.1"/>
    <property type="molecule type" value="Genomic_DNA"/>
</dbReference>
<dbReference type="EMBL" id="AE014134">
    <property type="protein sequence ID" value="AAZ66581.1"/>
    <property type="molecule type" value="Genomic_DNA"/>
</dbReference>
<dbReference type="EMBL" id="AE014134">
    <property type="protein sequence ID" value="AAZ66526.1"/>
    <property type="molecule type" value="Genomic_DNA"/>
</dbReference>
<dbReference type="EMBL" id="AE014134">
    <property type="protein sequence ID" value="AAZ66516.1"/>
    <property type="molecule type" value="Genomic_DNA"/>
</dbReference>
<dbReference type="PIR" id="S10095">
    <property type="entry name" value="HSFF22"/>
</dbReference>
<dbReference type="RefSeq" id="NP_001027283.1">
    <property type="nucleotide sequence ID" value="NM_001032112.2"/>
</dbReference>
<dbReference type="RefSeq" id="NP_001027287.1">
    <property type="nucleotide sequence ID" value="NM_001032116.2"/>
</dbReference>
<dbReference type="RefSeq" id="NP_001027291.1">
    <property type="nucleotide sequence ID" value="NM_001032120.2"/>
</dbReference>
<dbReference type="RefSeq" id="NP_001027296.1">
    <property type="nucleotide sequence ID" value="NM_001032125.2"/>
</dbReference>
<dbReference type="RefSeq" id="NP_001027300.1">
    <property type="nucleotide sequence ID" value="NM_001032129.2"/>
</dbReference>
<dbReference type="RefSeq" id="NP_001027305.1">
    <property type="nucleotide sequence ID" value="NM_001032134.2"/>
</dbReference>
<dbReference type="RefSeq" id="NP_001027310.1">
    <property type="nucleotide sequence ID" value="NM_001032139.2"/>
</dbReference>
<dbReference type="RefSeq" id="NP_001027315.1">
    <property type="nucleotide sequence ID" value="NM_001032144.2"/>
</dbReference>
<dbReference type="RefSeq" id="NP_001027320.1">
    <property type="nucleotide sequence ID" value="NM_001032149.2"/>
</dbReference>
<dbReference type="RefSeq" id="NP_001027325.1">
    <property type="nucleotide sequence ID" value="NM_001032154.2"/>
</dbReference>
<dbReference type="RefSeq" id="NP_001027330.1">
    <property type="nucleotide sequence ID" value="NM_001032159.2"/>
</dbReference>
<dbReference type="RefSeq" id="NP_001027335.1">
    <property type="nucleotide sequence ID" value="NM_001032164.2"/>
</dbReference>
<dbReference type="RefSeq" id="NP_001027340.1">
    <property type="nucleotide sequence ID" value="NM_001032169.2"/>
</dbReference>
<dbReference type="RefSeq" id="NP_001027345.1">
    <property type="nucleotide sequence ID" value="NM_001032174.2"/>
</dbReference>
<dbReference type="RefSeq" id="NP_001027350.1">
    <property type="nucleotide sequence ID" value="NM_001032179.2"/>
</dbReference>
<dbReference type="RefSeq" id="NP_001027355.1">
    <property type="nucleotide sequence ID" value="NM_001032184.2"/>
</dbReference>
<dbReference type="RefSeq" id="NP_001027360.1">
    <property type="nucleotide sequence ID" value="NM_001032189.2"/>
</dbReference>
<dbReference type="RefSeq" id="NP_001027365.1">
    <property type="nucleotide sequence ID" value="NM_001032194.2"/>
</dbReference>
<dbReference type="RefSeq" id="NP_001027370.1">
    <property type="nucleotide sequence ID" value="NM_001032199.2"/>
</dbReference>
<dbReference type="RefSeq" id="NP_001027375.1">
    <property type="nucleotide sequence ID" value="NM_001032204.2"/>
</dbReference>
<dbReference type="RefSeq" id="NP_001027380.1">
    <property type="nucleotide sequence ID" value="NM_001032209.2"/>
</dbReference>
<dbReference type="RefSeq" id="NP_001027385.1">
    <property type="nucleotide sequence ID" value="NM_001032214.2"/>
</dbReference>
<dbReference type="RefSeq" id="NP_724342.1">
    <property type="nucleotide sequence ID" value="NM_165381.4"/>
</dbReference>
<dbReference type="PDB" id="2NQB">
    <property type="method" value="X-ray"/>
    <property type="resolution" value="2.30 A"/>
    <property type="chains" value="D/H=2-123"/>
</dbReference>
<dbReference type="PDB" id="2PYO">
    <property type="method" value="X-ray"/>
    <property type="resolution" value="2.43 A"/>
    <property type="chains" value="D/H=2-123"/>
</dbReference>
<dbReference type="PDB" id="4QLC">
    <property type="method" value="X-ray"/>
    <property type="resolution" value="3.50 A"/>
    <property type="chains" value="D/H=2-123"/>
</dbReference>
<dbReference type="PDB" id="4X23">
    <property type="method" value="X-ray"/>
    <property type="resolution" value="3.50 A"/>
    <property type="chains" value="D/H/N/R=33-122"/>
</dbReference>
<dbReference type="PDB" id="5CVE">
    <property type="method" value="X-ray"/>
    <property type="resolution" value="1.50 A"/>
    <property type="chains" value="D/E=3-10"/>
</dbReference>
<dbReference type="PDB" id="5WCU">
    <property type="method" value="X-ray"/>
    <property type="resolution" value="5.53 A"/>
    <property type="chains" value="D/H/N/R=29-122"/>
</dbReference>
<dbReference type="PDB" id="6DZT">
    <property type="method" value="EM"/>
    <property type="resolution" value="2.99 A"/>
    <property type="chains" value="D/H=2-123"/>
</dbReference>
<dbReference type="PDB" id="6PWE">
    <property type="method" value="EM"/>
    <property type="resolution" value="3.95 A"/>
    <property type="chains" value="D/H=1-123"/>
</dbReference>
<dbReference type="PDB" id="6PWF">
    <property type="method" value="EM"/>
    <property type="resolution" value="4.07 A"/>
    <property type="chains" value="D/H=1-123"/>
</dbReference>
<dbReference type="PDB" id="7PJ1">
    <property type="method" value="NMR"/>
    <property type="chains" value="B=2-123"/>
</dbReference>
<dbReference type="PDB" id="7XYF">
    <property type="method" value="EM"/>
    <property type="resolution" value="4.30 A"/>
    <property type="chains" value="D/H=29-123"/>
</dbReference>
<dbReference type="PDB" id="7XYG">
    <property type="method" value="EM"/>
    <property type="resolution" value="5.40 A"/>
    <property type="chains" value="D/H=1-123"/>
</dbReference>
<dbReference type="PDB" id="8PP6">
    <property type="method" value="EM"/>
    <property type="resolution" value="3.18 A"/>
    <property type="chains" value="D/H=2-123"/>
</dbReference>
<dbReference type="PDB" id="8PP7">
    <property type="method" value="EM"/>
    <property type="resolution" value="2.91 A"/>
    <property type="chains" value="D/H=1-123"/>
</dbReference>
<dbReference type="PDB" id="8UX1">
    <property type="method" value="EM"/>
    <property type="resolution" value="2.50 A"/>
    <property type="chains" value="D/H=2-123"/>
</dbReference>
<dbReference type="PDBsum" id="2NQB"/>
<dbReference type="PDBsum" id="2PYO"/>
<dbReference type="PDBsum" id="4QLC"/>
<dbReference type="PDBsum" id="4X23"/>
<dbReference type="PDBsum" id="5CVE"/>
<dbReference type="PDBsum" id="5WCU"/>
<dbReference type="PDBsum" id="6DZT"/>
<dbReference type="PDBsum" id="6PWE"/>
<dbReference type="PDBsum" id="6PWF"/>
<dbReference type="PDBsum" id="7PJ1"/>
<dbReference type="PDBsum" id="7XYF"/>
<dbReference type="PDBsum" id="7XYG"/>
<dbReference type="PDBsum" id="8PP6"/>
<dbReference type="PDBsum" id="8PP7"/>
<dbReference type="PDBsum" id="8UX1"/>
<dbReference type="EMDB" id="EMD-17796"/>
<dbReference type="EMDB" id="EMD-17797"/>
<dbReference type="EMDB" id="EMD-20506"/>
<dbReference type="EMDB" id="EMD-20507"/>
<dbReference type="EMDB" id="EMD-33520"/>
<dbReference type="EMDB" id="EMD-33521"/>
<dbReference type="EMDB" id="EMD-42685"/>
<dbReference type="EMDB" id="EMD-48619"/>
<dbReference type="EMDB" id="EMD-48620"/>
<dbReference type="EMDB" id="EMD-48626"/>
<dbReference type="EMDB" id="EMD-8938"/>
<dbReference type="SASBDB" id="P02283"/>
<dbReference type="SMR" id="P02283"/>
<dbReference type="BioGRID" id="533862">
    <property type="interactions" value="1"/>
</dbReference>
<dbReference type="BioGRID" id="77520">
    <property type="interactions" value="28"/>
</dbReference>
<dbReference type="DIP" id="DIP-22804N"/>
<dbReference type="FunCoup" id="P02283">
    <property type="interactions" value="176"/>
</dbReference>
<dbReference type="IntAct" id="P02283">
    <property type="interactions" value="8"/>
</dbReference>
<dbReference type="MINT" id="P02283"/>
<dbReference type="STRING" id="7227.FBpp0085281"/>
<dbReference type="GlyCosmos" id="P02283">
    <property type="glycosylation" value="1 site, No reported glycans"/>
</dbReference>
<dbReference type="GlyGen" id="P02283">
    <property type="glycosylation" value="1 site"/>
</dbReference>
<dbReference type="iPTMnet" id="P02283"/>
<dbReference type="PaxDb" id="7227-FBpp0085281"/>
<dbReference type="ABCD" id="P02283">
    <property type="antibodies" value="1 sequenced antibody"/>
</dbReference>
<dbReference type="EnsemblMetazoa" id="FBtr0085927">
    <property type="protein sequence ID" value="FBpp0085281"/>
    <property type="gene ID" value="FBgn0061209"/>
</dbReference>
<dbReference type="EnsemblMetazoa" id="FBtr0091872">
    <property type="protein sequence ID" value="FBpp0091113"/>
    <property type="gene ID" value="FBgn0053868"/>
</dbReference>
<dbReference type="EnsemblMetazoa" id="FBtr0091874">
    <property type="protein sequence ID" value="FBpp0091115"/>
    <property type="gene ID" value="FBgn0053870"/>
</dbReference>
<dbReference type="EnsemblMetazoa" id="FBtr0091876">
    <property type="protein sequence ID" value="FBpp0091117"/>
    <property type="gene ID" value="FBgn0053872"/>
</dbReference>
<dbReference type="EnsemblMetazoa" id="FBtr0091878">
    <property type="protein sequence ID" value="FBpp0091119"/>
    <property type="gene ID" value="FBgn0053874"/>
</dbReference>
<dbReference type="EnsemblMetazoa" id="FBtr0091880">
    <property type="protein sequence ID" value="FBpp0091121"/>
    <property type="gene ID" value="FBgn0053876"/>
</dbReference>
<dbReference type="EnsemblMetazoa" id="FBtr0091882">
    <property type="protein sequence ID" value="FBpp0091123"/>
    <property type="gene ID" value="FBgn0053878"/>
</dbReference>
<dbReference type="EnsemblMetazoa" id="FBtr0091884">
    <property type="protein sequence ID" value="FBpp0091125"/>
    <property type="gene ID" value="FBgn0053880"/>
</dbReference>
<dbReference type="EnsemblMetazoa" id="FBtr0091886">
    <property type="protein sequence ID" value="FBpp0091127"/>
    <property type="gene ID" value="FBgn0053882"/>
</dbReference>
<dbReference type="EnsemblMetazoa" id="FBtr0091888">
    <property type="protein sequence ID" value="FBpp0091129"/>
    <property type="gene ID" value="FBgn0053884"/>
</dbReference>
<dbReference type="EnsemblMetazoa" id="FBtr0091890">
    <property type="protein sequence ID" value="FBpp0091131"/>
    <property type="gene ID" value="FBgn0053886"/>
</dbReference>
<dbReference type="EnsemblMetazoa" id="FBtr0091892">
    <property type="protein sequence ID" value="FBpp0091133"/>
    <property type="gene ID" value="FBgn0053888"/>
</dbReference>
<dbReference type="EnsemblMetazoa" id="FBtr0091894">
    <property type="protein sequence ID" value="FBpp0091135"/>
    <property type="gene ID" value="FBgn0053890"/>
</dbReference>
<dbReference type="EnsemblMetazoa" id="FBtr0091896">
    <property type="protein sequence ID" value="FBpp0091137"/>
    <property type="gene ID" value="FBgn0053892"/>
</dbReference>
<dbReference type="EnsemblMetazoa" id="FBtr0091898">
    <property type="protein sequence ID" value="FBpp0091139"/>
    <property type="gene ID" value="FBgn0053894"/>
</dbReference>
<dbReference type="EnsemblMetazoa" id="FBtr0091900">
    <property type="protein sequence ID" value="FBpp0091141"/>
    <property type="gene ID" value="FBgn0053896"/>
</dbReference>
<dbReference type="EnsemblMetazoa" id="FBtr0091902">
    <property type="protein sequence ID" value="FBpp0091143"/>
    <property type="gene ID" value="FBgn0053898"/>
</dbReference>
<dbReference type="EnsemblMetazoa" id="FBtr0091904">
    <property type="protein sequence ID" value="FBpp0091145"/>
    <property type="gene ID" value="FBgn0053900"/>
</dbReference>
<dbReference type="EnsemblMetazoa" id="FBtr0091906">
    <property type="protein sequence ID" value="FBpp0091147"/>
    <property type="gene ID" value="FBgn0053902"/>
</dbReference>
<dbReference type="EnsemblMetazoa" id="FBtr0091908">
    <property type="protein sequence ID" value="FBpp0091149"/>
    <property type="gene ID" value="FBgn0053904"/>
</dbReference>
<dbReference type="EnsemblMetazoa" id="FBtr0091910">
    <property type="protein sequence ID" value="FBpp0091151"/>
    <property type="gene ID" value="FBgn0053906"/>
</dbReference>
<dbReference type="EnsemblMetazoa" id="FBtr0091912">
    <property type="protein sequence ID" value="FBpp0091153"/>
    <property type="gene ID" value="FBgn0053908"/>
</dbReference>
<dbReference type="EnsemblMetazoa" id="FBtr0091914">
    <property type="protein sequence ID" value="FBpp0091155"/>
    <property type="gene ID" value="FBgn0053910"/>
</dbReference>
<dbReference type="GeneID" id="326273"/>
<dbReference type="GeneID" id="3771809"/>
<dbReference type="GeneID" id="3771891"/>
<dbReference type="GeneID" id="3771957"/>
<dbReference type="GeneID" id="3772013"/>
<dbReference type="GeneID" id="3772058"/>
<dbReference type="GeneID" id="3772081"/>
<dbReference type="GeneID" id="3772083"/>
<dbReference type="GeneID" id="3772094"/>
<dbReference type="GeneID" id="3772099"/>
<dbReference type="GeneID" id="3772104"/>
<dbReference type="GeneID" id="3772166"/>
<dbReference type="GeneID" id="3772203"/>
<dbReference type="GeneID" id="3772248"/>
<dbReference type="GeneID" id="3772264"/>
<dbReference type="GeneID" id="3772265"/>
<dbReference type="GeneID" id="3772271"/>
<dbReference type="GeneID" id="3772276"/>
<dbReference type="GeneID" id="3772299"/>
<dbReference type="GeneID" id="3772336"/>
<dbReference type="GeneID" id="3772496"/>
<dbReference type="GeneID" id="3772502"/>
<dbReference type="GeneID" id="3772575"/>
<dbReference type="KEGG" id="dme:Dmel_CG17949"/>
<dbReference type="KEGG" id="dme:Dmel_CG33868"/>
<dbReference type="KEGG" id="dme:Dmel_CG33870"/>
<dbReference type="KEGG" id="dme:Dmel_CG33872"/>
<dbReference type="KEGG" id="dme:Dmel_CG33874"/>
<dbReference type="KEGG" id="dme:Dmel_CG33876"/>
<dbReference type="KEGG" id="dme:Dmel_CG33878"/>
<dbReference type="KEGG" id="dme:Dmel_CG33880"/>
<dbReference type="KEGG" id="dme:Dmel_CG33882"/>
<dbReference type="KEGG" id="dme:Dmel_CG33884"/>
<dbReference type="KEGG" id="dme:Dmel_CG33886"/>
<dbReference type="KEGG" id="dme:Dmel_CG33888"/>
<dbReference type="KEGG" id="dme:Dmel_CG33890"/>
<dbReference type="KEGG" id="dme:Dmel_CG33892"/>
<dbReference type="KEGG" id="dme:Dmel_CG33894"/>
<dbReference type="KEGG" id="dme:Dmel_CG33896"/>
<dbReference type="KEGG" id="dme:Dmel_CG33898"/>
<dbReference type="KEGG" id="dme:Dmel_CG33900"/>
<dbReference type="KEGG" id="dme:Dmel_CG33902"/>
<dbReference type="KEGG" id="dme:Dmel_CG33904"/>
<dbReference type="KEGG" id="dme:Dmel_CG33906"/>
<dbReference type="KEGG" id="dme:Dmel_CG33908"/>
<dbReference type="KEGG" id="dme:Dmel_CG33910"/>
<dbReference type="UCSC" id="CG17949-RA">
    <property type="organism name" value="d. melanogaster"/>
</dbReference>
<dbReference type="AGR" id="FB:FBgn0001198"/>
<dbReference type="AGR" id="FB:FBgn0053868"/>
<dbReference type="AGR" id="FB:FBgn0053870"/>
<dbReference type="AGR" id="FB:FBgn0053872"/>
<dbReference type="AGR" id="FB:FBgn0053874"/>
<dbReference type="AGR" id="FB:FBgn0053876"/>
<dbReference type="AGR" id="FB:FBgn0053878"/>
<dbReference type="AGR" id="FB:FBgn0053880"/>
<dbReference type="AGR" id="FB:FBgn0053882"/>
<dbReference type="AGR" id="FB:FBgn0053884"/>
<dbReference type="AGR" id="FB:FBgn0053886"/>
<dbReference type="AGR" id="FB:FBgn0053888"/>
<dbReference type="AGR" id="FB:FBgn0053890"/>
<dbReference type="AGR" id="FB:FBgn0053892"/>
<dbReference type="AGR" id="FB:FBgn0053894"/>
<dbReference type="AGR" id="FB:FBgn0053896"/>
<dbReference type="AGR" id="FB:FBgn0053898"/>
<dbReference type="AGR" id="FB:FBgn0053900"/>
<dbReference type="AGR" id="FB:FBgn0053902"/>
<dbReference type="AGR" id="FB:FBgn0053904"/>
<dbReference type="AGR" id="FB:FBgn0053906"/>
<dbReference type="AGR" id="FB:FBgn0053908"/>
<dbReference type="AGR" id="FB:FBgn0053910"/>
<dbReference type="AGR" id="FB:FBgn0061209"/>
<dbReference type="CTD" id="326273"/>
<dbReference type="CTD" id="3771809"/>
<dbReference type="CTD" id="3771891"/>
<dbReference type="CTD" id="3771957"/>
<dbReference type="CTD" id="3772013"/>
<dbReference type="CTD" id="3772058"/>
<dbReference type="CTD" id="3772081"/>
<dbReference type="CTD" id="3772083"/>
<dbReference type="CTD" id="3772094"/>
<dbReference type="CTD" id="3772099"/>
<dbReference type="CTD" id="3772104"/>
<dbReference type="CTD" id="3772166"/>
<dbReference type="CTD" id="3772203"/>
<dbReference type="CTD" id="3772248"/>
<dbReference type="CTD" id="3772264"/>
<dbReference type="CTD" id="3772265"/>
<dbReference type="CTD" id="3772271"/>
<dbReference type="CTD" id="3772276"/>
<dbReference type="CTD" id="3772299"/>
<dbReference type="CTD" id="3772336"/>
<dbReference type="CTD" id="3772496"/>
<dbReference type="CTD" id="3772502"/>
<dbReference type="CTD" id="3772575"/>
<dbReference type="FlyBase" id="FBgn0001198">
    <property type="gene designation" value="His2B"/>
</dbReference>
<dbReference type="FlyBase" id="FBgn0061209">
    <property type="gene designation" value="His2B:CG17949"/>
</dbReference>
<dbReference type="FlyBase" id="FBgn0053868">
    <property type="gene designation" value="His2B:CG33868"/>
</dbReference>
<dbReference type="FlyBase" id="FBgn0053870">
    <property type="gene designation" value="His2B:CG33870"/>
</dbReference>
<dbReference type="FlyBase" id="FBgn0053872">
    <property type="gene designation" value="His2B:CG33872"/>
</dbReference>
<dbReference type="FlyBase" id="FBgn0053874">
    <property type="gene designation" value="His2B:CG33874"/>
</dbReference>
<dbReference type="FlyBase" id="FBgn0053876">
    <property type="gene designation" value="His2B:CG33876"/>
</dbReference>
<dbReference type="FlyBase" id="FBgn0053878">
    <property type="gene designation" value="His2B:CG33878"/>
</dbReference>
<dbReference type="FlyBase" id="FBgn0053880">
    <property type="gene designation" value="His2B:CG33880"/>
</dbReference>
<dbReference type="FlyBase" id="FBgn0053882">
    <property type="gene designation" value="His2B:CG33882"/>
</dbReference>
<dbReference type="FlyBase" id="FBgn0053884">
    <property type="gene designation" value="His2B:CG33884"/>
</dbReference>
<dbReference type="FlyBase" id="FBgn0053886">
    <property type="gene designation" value="His2B:CG33886"/>
</dbReference>
<dbReference type="FlyBase" id="FBgn0053888">
    <property type="gene designation" value="His2B:CG33888"/>
</dbReference>
<dbReference type="FlyBase" id="FBgn0053890">
    <property type="gene designation" value="His2B:CG33890"/>
</dbReference>
<dbReference type="FlyBase" id="FBgn0053892">
    <property type="gene designation" value="His2B:CG33892"/>
</dbReference>
<dbReference type="FlyBase" id="FBgn0053894">
    <property type="gene designation" value="His2B:CG33894"/>
</dbReference>
<dbReference type="FlyBase" id="FBgn0053896">
    <property type="gene designation" value="His2B:CG33896"/>
</dbReference>
<dbReference type="FlyBase" id="FBgn0053898">
    <property type="gene designation" value="His2B:CG33898"/>
</dbReference>
<dbReference type="FlyBase" id="FBgn0053900">
    <property type="gene designation" value="His2B:CG33900"/>
</dbReference>
<dbReference type="FlyBase" id="FBgn0053902">
    <property type="gene designation" value="His2B:CG33902"/>
</dbReference>
<dbReference type="FlyBase" id="FBgn0053904">
    <property type="gene designation" value="His2B:CG33904"/>
</dbReference>
<dbReference type="FlyBase" id="FBgn0053906">
    <property type="gene designation" value="His2B:CG33906"/>
</dbReference>
<dbReference type="FlyBase" id="FBgn0053908">
    <property type="gene designation" value="His2B:CG33908"/>
</dbReference>
<dbReference type="FlyBase" id="FBgn0053910">
    <property type="gene designation" value="His2B:CG33910"/>
</dbReference>
<dbReference type="VEuPathDB" id="VectorBase:FBgn0053868"/>
<dbReference type="VEuPathDB" id="VectorBase:FBgn0053870"/>
<dbReference type="VEuPathDB" id="VectorBase:FBgn0053872"/>
<dbReference type="VEuPathDB" id="VectorBase:FBgn0053874"/>
<dbReference type="VEuPathDB" id="VectorBase:FBgn0053876"/>
<dbReference type="VEuPathDB" id="VectorBase:FBgn0053878"/>
<dbReference type="VEuPathDB" id="VectorBase:FBgn0053880"/>
<dbReference type="VEuPathDB" id="VectorBase:FBgn0053882"/>
<dbReference type="VEuPathDB" id="VectorBase:FBgn0053884"/>
<dbReference type="VEuPathDB" id="VectorBase:FBgn0053886"/>
<dbReference type="VEuPathDB" id="VectorBase:FBgn0053888"/>
<dbReference type="VEuPathDB" id="VectorBase:FBgn0053890"/>
<dbReference type="VEuPathDB" id="VectorBase:FBgn0053892"/>
<dbReference type="VEuPathDB" id="VectorBase:FBgn0053894"/>
<dbReference type="VEuPathDB" id="VectorBase:FBgn0053896"/>
<dbReference type="VEuPathDB" id="VectorBase:FBgn0053898"/>
<dbReference type="VEuPathDB" id="VectorBase:FBgn0053900"/>
<dbReference type="VEuPathDB" id="VectorBase:FBgn0053902"/>
<dbReference type="VEuPathDB" id="VectorBase:FBgn0053904"/>
<dbReference type="VEuPathDB" id="VectorBase:FBgn0053906"/>
<dbReference type="VEuPathDB" id="VectorBase:FBgn0053908"/>
<dbReference type="VEuPathDB" id="VectorBase:FBgn0053910"/>
<dbReference type="VEuPathDB" id="VectorBase:FBgn0061209"/>
<dbReference type="eggNOG" id="KOG1744">
    <property type="taxonomic scope" value="Eukaryota"/>
</dbReference>
<dbReference type="GeneTree" id="ENSGT01130000278348"/>
<dbReference type="HOGENOM" id="CLU_075666_2_0_1"/>
<dbReference type="InParanoid" id="P02283"/>
<dbReference type="OMA" id="ELAKHAX"/>
<dbReference type="OrthoDB" id="7633403at2759"/>
<dbReference type="PhylomeDB" id="P02283"/>
<dbReference type="Reactome" id="R-DME-201722">
    <property type="pathway name" value="Formation of the beta-catenin:TCF transactivating complex"/>
</dbReference>
<dbReference type="Reactome" id="R-DME-212300">
    <property type="pathway name" value="PRC2 methylates histones and DNA"/>
</dbReference>
<dbReference type="Reactome" id="R-DME-2299718">
    <property type="pathway name" value="Condensation of Prophase Chromosomes"/>
</dbReference>
<dbReference type="Reactome" id="R-DME-2559580">
    <property type="pathway name" value="Oxidative Stress Induced Senescence"/>
</dbReference>
<dbReference type="Reactome" id="R-DME-2559582">
    <property type="pathway name" value="Senescence-Associated Secretory Phenotype (SASP)"/>
</dbReference>
<dbReference type="Reactome" id="R-DME-3214815">
    <property type="pathway name" value="HDACs deacetylate histones"/>
</dbReference>
<dbReference type="Reactome" id="R-DME-3214847">
    <property type="pathway name" value="HATs acetylate histones"/>
</dbReference>
<dbReference type="Reactome" id="R-DME-427359">
    <property type="pathway name" value="SIRT1 negatively regulates rRNA expression"/>
</dbReference>
<dbReference type="Reactome" id="R-DME-427413">
    <property type="pathway name" value="NoRC negatively regulates rRNA expression"/>
</dbReference>
<dbReference type="Reactome" id="R-DME-5578749">
    <property type="pathway name" value="Transcriptional regulation by small RNAs"/>
</dbReference>
<dbReference type="Reactome" id="R-DME-5625886">
    <property type="pathway name" value="Activated PKN1 stimulates transcription of AR (androgen receptor) regulated genes KLK2 and KLK3"/>
</dbReference>
<dbReference type="Reactome" id="R-DME-5689880">
    <property type="pathway name" value="Ub-specific processing proteases"/>
</dbReference>
<dbReference type="Reactome" id="R-DME-5693565">
    <property type="pathway name" value="Recruitment and ATM-mediated phosphorylation of repair and signaling proteins at DNA double strand breaks"/>
</dbReference>
<dbReference type="Reactome" id="R-DME-68616">
    <property type="pathway name" value="Assembly of the ORC complex at the origin of replication"/>
</dbReference>
<dbReference type="Reactome" id="R-DME-73772">
    <property type="pathway name" value="RNA Polymerase I Promoter Escape"/>
</dbReference>
<dbReference type="Reactome" id="R-DME-8866654">
    <property type="pathway name" value="E3 ubiquitin ligases ubiquitinate target proteins"/>
</dbReference>
<dbReference type="Reactome" id="R-DME-8936459">
    <property type="pathway name" value="RUNX1 regulates genes involved in megakaryocyte differentiation and platelet function"/>
</dbReference>
<dbReference type="Reactome" id="R-DME-9018519">
    <property type="pathway name" value="Estrogen-dependent gene expression"/>
</dbReference>
<dbReference type="Reactome" id="R-DME-9841922">
    <property type="pathway name" value="MLL4 and MLL3 complexes regulate expression of PPARG target genes in adipogenesis and hepatic steatosis"/>
</dbReference>
<dbReference type="Reactome" id="R-DME-9843940">
    <property type="pathway name" value="Regulation of endogenous retroelements by KRAB-ZFP proteins"/>
</dbReference>
<dbReference type="SignaLink" id="P02283"/>
<dbReference type="EvolutionaryTrace" id="P02283"/>
<dbReference type="PRO" id="PR:P02283"/>
<dbReference type="Proteomes" id="UP000000803">
    <property type="component" value="Chromosome 2L"/>
</dbReference>
<dbReference type="Bgee" id="FBgn0053868">
    <property type="expression patterns" value="Expressed in spermatocyte in testis and 109 other cell types or tissues"/>
</dbReference>
<dbReference type="GO" id="GO:0000786">
    <property type="term" value="C:nucleosome"/>
    <property type="evidence" value="ECO:0000304"/>
    <property type="project" value="FlyBase"/>
</dbReference>
<dbReference type="GO" id="GO:0005634">
    <property type="term" value="C:nucleus"/>
    <property type="evidence" value="ECO:0007669"/>
    <property type="project" value="UniProtKB-SubCell"/>
</dbReference>
<dbReference type="GO" id="GO:0003677">
    <property type="term" value="F:DNA binding"/>
    <property type="evidence" value="ECO:0000250"/>
    <property type="project" value="FlyBase"/>
</dbReference>
<dbReference type="GO" id="GO:0046982">
    <property type="term" value="F:protein heterodimerization activity"/>
    <property type="evidence" value="ECO:0007669"/>
    <property type="project" value="InterPro"/>
</dbReference>
<dbReference type="GO" id="GO:0044877">
    <property type="term" value="F:protein-containing complex binding"/>
    <property type="evidence" value="ECO:0000314"/>
    <property type="project" value="UniProtKB"/>
</dbReference>
<dbReference type="GO" id="GO:0030527">
    <property type="term" value="F:structural constituent of chromatin"/>
    <property type="evidence" value="ECO:0007669"/>
    <property type="project" value="InterPro"/>
</dbReference>
<dbReference type="GO" id="GO:0006325">
    <property type="term" value="P:chromatin organization"/>
    <property type="evidence" value="ECO:0000250"/>
    <property type="project" value="FlyBase"/>
</dbReference>
<dbReference type="CDD" id="cd22910">
    <property type="entry name" value="HFD_H2B"/>
    <property type="match status" value="1"/>
</dbReference>
<dbReference type="DisProt" id="DP01250"/>
<dbReference type="FunFam" id="1.10.20.10:FF:000016">
    <property type="entry name" value="Histone H2B"/>
    <property type="match status" value="1"/>
</dbReference>
<dbReference type="Gene3D" id="1.10.20.10">
    <property type="entry name" value="Histone, subunit A"/>
    <property type="match status" value="1"/>
</dbReference>
<dbReference type="InterPro" id="IPR009072">
    <property type="entry name" value="Histone-fold"/>
</dbReference>
<dbReference type="InterPro" id="IPR007125">
    <property type="entry name" value="Histone_H2A/H2B/H3"/>
</dbReference>
<dbReference type="InterPro" id="IPR000558">
    <property type="entry name" value="Histone_H2B"/>
</dbReference>
<dbReference type="InterPro" id="IPR055333">
    <property type="entry name" value="HISTONE_H2B_site"/>
</dbReference>
<dbReference type="PANTHER" id="PTHR23428">
    <property type="entry name" value="HISTONE H2B"/>
    <property type="match status" value="1"/>
</dbReference>
<dbReference type="Pfam" id="PF00125">
    <property type="entry name" value="Histone"/>
    <property type="match status" value="1"/>
</dbReference>
<dbReference type="PRINTS" id="PR00621">
    <property type="entry name" value="HISTONEH2B"/>
</dbReference>
<dbReference type="SMART" id="SM00427">
    <property type="entry name" value="H2B"/>
    <property type="match status" value="1"/>
</dbReference>
<dbReference type="SUPFAM" id="SSF47113">
    <property type="entry name" value="Histone-fold"/>
    <property type="match status" value="1"/>
</dbReference>
<dbReference type="PROSITE" id="PS00357">
    <property type="entry name" value="HISTONE_H2B"/>
    <property type="match status" value="1"/>
</dbReference>
<organism>
    <name type="scientific">Drosophila melanogaster</name>
    <name type="common">Fruit fly</name>
    <dbReference type="NCBI Taxonomy" id="7227"/>
    <lineage>
        <taxon>Eukaryota</taxon>
        <taxon>Metazoa</taxon>
        <taxon>Ecdysozoa</taxon>
        <taxon>Arthropoda</taxon>
        <taxon>Hexapoda</taxon>
        <taxon>Insecta</taxon>
        <taxon>Pterygota</taxon>
        <taxon>Neoptera</taxon>
        <taxon>Endopterygota</taxon>
        <taxon>Diptera</taxon>
        <taxon>Brachycera</taxon>
        <taxon>Muscomorpha</taxon>
        <taxon>Ephydroidea</taxon>
        <taxon>Drosophilidae</taxon>
        <taxon>Drosophila</taxon>
        <taxon>Sophophora</taxon>
    </lineage>
</organism>
<gene>
    <name type="primary">His2B</name>
</gene>
<gene>
    <name type="primary">His2B:CG17949</name>
    <name type="ORF">CG17949</name>
</gene>
<gene>
    <name type="primary">His2B:CG33868</name>
    <name type="ORF">CG33868</name>
</gene>
<gene>
    <name type="primary">His2B:CG33870</name>
    <name type="ORF">CG33870</name>
</gene>
<gene>
    <name type="primary">His2B:CG33872</name>
    <name type="ORF">CG33872</name>
</gene>
<gene>
    <name type="primary">His2B:CG33874</name>
    <name type="ORF">CG33874</name>
</gene>
<gene>
    <name type="primary">His2B:CG33876</name>
    <name type="ORF">CG33876</name>
</gene>
<gene>
    <name type="primary">His2B:CG33878</name>
    <name type="ORF">CG33878</name>
</gene>
<gene>
    <name type="primary">His2B:CG33880</name>
    <name type="ORF">CG33880</name>
</gene>
<gene>
    <name type="primary">His2B:CG33882</name>
    <name type="ORF">CG33882</name>
</gene>
<gene>
    <name type="primary">His2B:CG33884</name>
    <name type="ORF">CG33884</name>
</gene>
<gene>
    <name type="primary">His2B:CG33886</name>
    <name type="ORF">CG33886</name>
</gene>
<gene>
    <name type="primary">His2B:CG33888</name>
    <name type="ORF">CG33888</name>
</gene>
<gene>
    <name type="primary">His2B:CG33890</name>
    <name type="ORF">CG33890</name>
</gene>
<gene>
    <name type="primary">His2B:CG33892</name>
    <name type="ORF">CG33892</name>
</gene>
<gene>
    <name type="primary">His2B:CG33894</name>
    <name type="ORF">CG33894</name>
</gene>
<gene>
    <name type="primary">His2B:CG33896</name>
    <name type="ORF">CG33896</name>
</gene>
<gene>
    <name type="primary">His2B:CG33898</name>
    <name type="ORF">CG33898</name>
</gene>
<gene>
    <name type="primary">His2B:CG33900</name>
    <name type="ORF">CG33900</name>
</gene>
<gene>
    <name type="primary">His2B:CG33902</name>
    <name type="ORF">CG33902</name>
</gene>
<gene>
    <name type="primary">His2B:CG33904</name>
    <name type="ORF">CG33904</name>
</gene>
<gene>
    <name type="primary">His2B:CG33906</name>
    <name type="ORF">CG33906</name>
</gene>
<gene>
    <name type="primary">His2B:CG33908</name>
    <name type="ORF">CG33908</name>
</gene>
<gene>
    <name type="primary">His2B:CG33910</name>
    <name type="ORF">CG33910</name>
</gene>
<evidence type="ECO:0000250" key="1"/>
<evidence type="ECO:0000256" key="2">
    <source>
        <dbReference type="SAM" id="MobiDB-lite"/>
    </source>
</evidence>
<evidence type="ECO:0000269" key="3">
    <source>
    </source>
</evidence>
<evidence type="ECO:0000269" key="4">
    <source>
    </source>
</evidence>
<evidence type="ECO:0000269" key="5">
    <source>
    </source>
</evidence>
<evidence type="ECO:0000269" key="6">
    <source>
    </source>
</evidence>
<evidence type="ECO:0000269" key="7">
    <source>
    </source>
</evidence>
<evidence type="ECO:0000305" key="8"/>
<evidence type="ECO:0000305" key="9">
    <source>
    </source>
</evidence>
<evidence type="ECO:0000305" key="10">
    <source>
    </source>
</evidence>
<evidence type="ECO:0000305" key="11">
    <source>
    </source>
</evidence>
<evidence type="ECO:0000305" key="12">
    <source>
    </source>
</evidence>
<evidence type="ECO:0007829" key="13">
    <source>
        <dbReference type="PDB" id="2NQB"/>
    </source>
</evidence>
<evidence type="ECO:0007829" key="14">
    <source>
        <dbReference type="PDB" id="7PJ1"/>
    </source>
</evidence>
<evidence type="ECO:0007829" key="15">
    <source>
        <dbReference type="PDB" id="8UX1"/>
    </source>
</evidence>
<sequence>MPPKTSGKAAKKAGKAQKNITKTDKKKKRKRKESYAIYIYKVLKQVHPDTGISSKAMSIMNSFVNDIFERIAAEASRLAHYNKRSTITSREIQTAVRLLLPGELAKHAVSEGTKAVTKYTSSK</sequence>